<gene>
    <name evidence="1" type="primary">psd</name>
    <name type="ordered locus">BRADO4692</name>
</gene>
<feature type="chain" id="PRO_1000026628" description="Phosphatidylserine decarboxylase beta chain" evidence="1">
    <location>
        <begin position="1"/>
        <end position="189"/>
    </location>
</feature>
<feature type="chain" id="PRO_1000026629" description="Phosphatidylserine decarboxylase alpha chain" evidence="1">
    <location>
        <begin position="190"/>
        <end position="232"/>
    </location>
</feature>
<feature type="active site" description="Schiff-base intermediate with substrate; via pyruvic acid" evidence="1">
    <location>
        <position position="190"/>
    </location>
</feature>
<feature type="site" description="Cleavage (non-hydrolytic); by autocatalysis" evidence="1">
    <location>
        <begin position="189"/>
        <end position="190"/>
    </location>
</feature>
<feature type="modified residue" description="Pyruvic acid (Ser); by autocatalysis" evidence="1">
    <location>
        <position position="190"/>
    </location>
</feature>
<reference key="1">
    <citation type="journal article" date="2007" name="Science">
        <title>Legumes symbioses: absence of nod genes in photosynthetic bradyrhizobia.</title>
        <authorList>
            <person name="Giraud E."/>
            <person name="Moulin L."/>
            <person name="Vallenet D."/>
            <person name="Barbe V."/>
            <person name="Cytryn E."/>
            <person name="Avarre J.-C."/>
            <person name="Jaubert M."/>
            <person name="Simon D."/>
            <person name="Cartieaux F."/>
            <person name="Prin Y."/>
            <person name="Bena G."/>
            <person name="Hannibal L."/>
            <person name="Fardoux J."/>
            <person name="Kojadinovic M."/>
            <person name="Vuillet L."/>
            <person name="Lajus A."/>
            <person name="Cruveiller S."/>
            <person name="Rouy Z."/>
            <person name="Mangenot S."/>
            <person name="Segurens B."/>
            <person name="Dossat C."/>
            <person name="Franck W.L."/>
            <person name="Chang W.-S."/>
            <person name="Saunders E."/>
            <person name="Bruce D."/>
            <person name="Richardson P."/>
            <person name="Normand P."/>
            <person name="Dreyfus B."/>
            <person name="Pignol D."/>
            <person name="Stacey G."/>
            <person name="Emerich D."/>
            <person name="Vermeglio A."/>
            <person name="Medigue C."/>
            <person name="Sadowsky M."/>
        </authorList>
    </citation>
    <scope>NUCLEOTIDE SEQUENCE [LARGE SCALE GENOMIC DNA]</scope>
    <source>
        <strain>ORS 278</strain>
    </source>
</reference>
<protein>
    <recommendedName>
        <fullName evidence="1">Phosphatidylserine decarboxylase proenzyme</fullName>
        <ecNumber evidence="1">4.1.1.65</ecNumber>
    </recommendedName>
    <component>
        <recommendedName>
            <fullName evidence="1">Phosphatidylserine decarboxylase alpha chain</fullName>
        </recommendedName>
    </component>
    <component>
        <recommendedName>
            <fullName evidence="1">Phosphatidylserine decarboxylase beta chain</fullName>
        </recommendedName>
    </component>
</protein>
<organism>
    <name type="scientific">Bradyrhizobium sp. (strain ORS 278)</name>
    <dbReference type="NCBI Taxonomy" id="114615"/>
    <lineage>
        <taxon>Bacteria</taxon>
        <taxon>Pseudomonadati</taxon>
        <taxon>Pseudomonadota</taxon>
        <taxon>Alphaproteobacteria</taxon>
        <taxon>Hyphomicrobiales</taxon>
        <taxon>Nitrobacteraceae</taxon>
        <taxon>Bradyrhizobium</taxon>
    </lineage>
</organism>
<name>PSD_BRASO</name>
<dbReference type="EC" id="4.1.1.65" evidence="1"/>
<dbReference type="EMBL" id="CU234118">
    <property type="protein sequence ID" value="CAL78422.1"/>
    <property type="molecule type" value="Genomic_DNA"/>
</dbReference>
<dbReference type="SMR" id="A4YWZ6"/>
<dbReference type="STRING" id="114615.BRADO4692"/>
<dbReference type="KEGG" id="bra:BRADO4692"/>
<dbReference type="eggNOG" id="COG0688">
    <property type="taxonomic scope" value="Bacteria"/>
</dbReference>
<dbReference type="HOGENOM" id="CLU_072492_0_0_5"/>
<dbReference type="OrthoDB" id="9790893at2"/>
<dbReference type="UniPathway" id="UPA00558">
    <property type="reaction ID" value="UER00616"/>
</dbReference>
<dbReference type="Proteomes" id="UP000001994">
    <property type="component" value="Chromosome"/>
</dbReference>
<dbReference type="GO" id="GO:0005886">
    <property type="term" value="C:plasma membrane"/>
    <property type="evidence" value="ECO:0007669"/>
    <property type="project" value="UniProtKB-SubCell"/>
</dbReference>
<dbReference type="GO" id="GO:0004609">
    <property type="term" value="F:phosphatidylserine decarboxylase activity"/>
    <property type="evidence" value="ECO:0007669"/>
    <property type="project" value="UniProtKB-UniRule"/>
</dbReference>
<dbReference type="GO" id="GO:0006646">
    <property type="term" value="P:phosphatidylethanolamine biosynthetic process"/>
    <property type="evidence" value="ECO:0007669"/>
    <property type="project" value="UniProtKB-UniRule"/>
</dbReference>
<dbReference type="HAMAP" id="MF_00664">
    <property type="entry name" value="PS_decarb_PSD_A"/>
    <property type="match status" value="1"/>
</dbReference>
<dbReference type="InterPro" id="IPR003817">
    <property type="entry name" value="PS_Dcarbxylase"/>
</dbReference>
<dbReference type="InterPro" id="IPR033175">
    <property type="entry name" value="PSD-A"/>
</dbReference>
<dbReference type="NCBIfam" id="NF003677">
    <property type="entry name" value="PRK05305.1-1"/>
    <property type="match status" value="1"/>
</dbReference>
<dbReference type="NCBIfam" id="NF003678">
    <property type="entry name" value="PRK05305.1-2"/>
    <property type="match status" value="1"/>
</dbReference>
<dbReference type="NCBIfam" id="NF003679">
    <property type="entry name" value="PRK05305.1-3"/>
    <property type="match status" value="1"/>
</dbReference>
<dbReference type="NCBIfam" id="NF003685">
    <property type="entry name" value="PRK05305.2-5"/>
    <property type="match status" value="1"/>
</dbReference>
<dbReference type="PANTHER" id="PTHR35809">
    <property type="entry name" value="ARCHAETIDYLSERINE DECARBOXYLASE PROENZYME-RELATED"/>
    <property type="match status" value="1"/>
</dbReference>
<dbReference type="PANTHER" id="PTHR35809:SF1">
    <property type="entry name" value="ARCHAETIDYLSERINE DECARBOXYLASE PROENZYME-RELATED"/>
    <property type="match status" value="1"/>
</dbReference>
<dbReference type="Pfam" id="PF02666">
    <property type="entry name" value="PS_Dcarbxylase"/>
    <property type="match status" value="1"/>
</dbReference>
<keyword id="KW-1003">Cell membrane</keyword>
<keyword id="KW-0210">Decarboxylase</keyword>
<keyword id="KW-0444">Lipid biosynthesis</keyword>
<keyword id="KW-0443">Lipid metabolism</keyword>
<keyword id="KW-0456">Lyase</keyword>
<keyword id="KW-0472">Membrane</keyword>
<keyword id="KW-0594">Phospholipid biosynthesis</keyword>
<keyword id="KW-1208">Phospholipid metabolism</keyword>
<keyword id="KW-0670">Pyruvate</keyword>
<keyword id="KW-1185">Reference proteome</keyword>
<keyword id="KW-0865">Zymogen</keyword>
<sequence>MSISNSIRAQIPPIHPEGYPFIGAFALVSLILFWIFAPLGWIGTLLTVWCALFFRDPIRVTPQREGLVVAPADGRISMITRALPPAELGLGDRPLLRVSIFMSVFNVHVNRSPVAGRIEKIAYRPGAFINAELDKASEDNERNSLAISTPHGKIGVVQIAGLVARRIVSFVREGQTVGAGERFGLIRFGSRLDVYFPDGTEVLVSEGQTAIAGETVLADFDVAVPGLTFRSQ</sequence>
<proteinExistence type="inferred from homology"/>
<comment type="function">
    <text evidence="1">Catalyzes the formation of phosphatidylethanolamine (PtdEtn) from phosphatidylserine (PtdSer).</text>
</comment>
<comment type="catalytic activity">
    <reaction evidence="1">
        <text>a 1,2-diacyl-sn-glycero-3-phospho-L-serine + H(+) = a 1,2-diacyl-sn-glycero-3-phosphoethanolamine + CO2</text>
        <dbReference type="Rhea" id="RHEA:20828"/>
        <dbReference type="ChEBI" id="CHEBI:15378"/>
        <dbReference type="ChEBI" id="CHEBI:16526"/>
        <dbReference type="ChEBI" id="CHEBI:57262"/>
        <dbReference type="ChEBI" id="CHEBI:64612"/>
        <dbReference type="EC" id="4.1.1.65"/>
    </reaction>
</comment>
<comment type="cofactor">
    <cofactor evidence="1">
        <name>pyruvate</name>
        <dbReference type="ChEBI" id="CHEBI:15361"/>
    </cofactor>
    <text evidence="1">Binds 1 pyruvoyl group covalently per subunit.</text>
</comment>
<comment type="pathway">
    <text evidence="1">Phospholipid metabolism; phosphatidylethanolamine biosynthesis; phosphatidylethanolamine from CDP-diacylglycerol: step 2/2.</text>
</comment>
<comment type="subunit">
    <text evidence="1">Heterodimer of a large membrane-associated beta subunit and a small pyruvoyl-containing alpha subunit.</text>
</comment>
<comment type="subcellular location">
    <subcellularLocation>
        <location evidence="1">Cell membrane</location>
        <topology evidence="1">Peripheral membrane protein</topology>
    </subcellularLocation>
</comment>
<comment type="PTM">
    <text evidence="1">Is synthesized initially as an inactive proenzyme. Formation of the active enzyme involves a self-maturation process in which the active site pyruvoyl group is generated from an internal serine residue via an autocatalytic post-translational modification. Two non-identical subunits are generated from the proenzyme in this reaction, and the pyruvate is formed at the N-terminus of the alpha chain, which is derived from the carboxyl end of the proenzyme. The post-translation cleavage follows an unusual pathway, termed non-hydrolytic serinolysis, in which the side chain hydroxyl group of the serine supplies its oxygen atom to form the C-terminus of the beta chain, while the remainder of the serine residue undergoes an oxidative deamination to produce ammonia and the pyruvoyl prosthetic group on the alpha chain.</text>
</comment>
<comment type="similarity">
    <text evidence="1">Belongs to the phosphatidylserine decarboxylase family. PSD-A subfamily.</text>
</comment>
<accession>A4YWZ6</accession>
<evidence type="ECO:0000255" key="1">
    <source>
        <dbReference type="HAMAP-Rule" id="MF_00664"/>
    </source>
</evidence>